<accession>Q9XAD5</accession>
<dbReference type="EC" id="2.8.1.7"/>
<dbReference type="EMBL" id="AL939110">
    <property type="protein sequence ID" value="CAB50746.1"/>
    <property type="molecule type" value="Genomic_DNA"/>
</dbReference>
<dbReference type="PIR" id="T35993">
    <property type="entry name" value="T35993"/>
</dbReference>
<dbReference type="RefSeq" id="NP_626186.1">
    <property type="nucleotide sequence ID" value="NC_003888.3"/>
</dbReference>
<dbReference type="RefSeq" id="WP_003976898.1">
    <property type="nucleotide sequence ID" value="NZ_VNID01000001.1"/>
</dbReference>
<dbReference type="SMR" id="Q9XAD5"/>
<dbReference type="FunCoup" id="Q9XAD5">
    <property type="interactions" value="161"/>
</dbReference>
<dbReference type="STRING" id="100226.gene:17759518"/>
<dbReference type="PaxDb" id="100226-SCO1921"/>
<dbReference type="KEGG" id="sco:SCO1921"/>
<dbReference type="PATRIC" id="fig|100226.15.peg.1947"/>
<dbReference type="eggNOG" id="COG0520">
    <property type="taxonomic scope" value="Bacteria"/>
</dbReference>
<dbReference type="HOGENOM" id="CLU_003433_2_5_11"/>
<dbReference type="InParanoid" id="Q9XAD5"/>
<dbReference type="OrthoDB" id="9804366at2"/>
<dbReference type="PhylomeDB" id="Q9XAD5"/>
<dbReference type="Proteomes" id="UP000001973">
    <property type="component" value="Chromosome"/>
</dbReference>
<dbReference type="GO" id="GO:0031071">
    <property type="term" value="F:cysteine desulfurase activity"/>
    <property type="evidence" value="ECO:0007669"/>
    <property type="project" value="UniProtKB-EC"/>
</dbReference>
<dbReference type="GO" id="GO:0030170">
    <property type="term" value="F:pyridoxal phosphate binding"/>
    <property type="evidence" value="ECO:0007669"/>
    <property type="project" value="InterPro"/>
</dbReference>
<dbReference type="GO" id="GO:0009058">
    <property type="term" value="P:biosynthetic process"/>
    <property type="evidence" value="ECO:0007669"/>
    <property type="project" value="UniProtKB-ARBA"/>
</dbReference>
<dbReference type="GO" id="GO:0006534">
    <property type="term" value="P:cysteine metabolic process"/>
    <property type="evidence" value="ECO:0007669"/>
    <property type="project" value="InterPro"/>
</dbReference>
<dbReference type="CDD" id="cd06453">
    <property type="entry name" value="SufS_like"/>
    <property type="match status" value="1"/>
</dbReference>
<dbReference type="Gene3D" id="3.90.1150.10">
    <property type="entry name" value="Aspartate Aminotransferase, domain 1"/>
    <property type="match status" value="1"/>
</dbReference>
<dbReference type="Gene3D" id="3.40.640.10">
    <property type="entry name" value="Type I PLP-dependent aspartate aminotransferase-like (Major domain)"/>
    <property type="match status" value="1"/>
</dbReference>
<dbReference type="InterPro" id="IPR000192">
    <property type="entry name" value="Aminotrans_V_dom"/>
</dbReference>
<dbReference type="InterPro" id="IPR010970">
    <property type="entry name" value="Cys_dSase_SufS"/>
</dbReference>
<dbReference type="InterPro" id="IPR015424">
    <property type="entry name" value="PyrdxlP-dep_Trfase"/>
</dbReference>
<dbReference type="InterPro" id="IPR015421">
    <property type="entry name" value="PyrdxlP-dep_Trfase_major"/>
</dbReference>
<dbReference type="InterPro" id="IPR015422">
    <property type="entry name" value="PyrdxlP-dep_Trfase_small"/>
</dbReference>
<dbReference type="NCBIfam" id="TIGR01979">
    <property type="entry name" value="sufS"/>
    <property type="match status" value="1"/>
</dbReference>
<dbReference type="PANTHER" id="PTHR43586">
    <property type="entry name" value="CYSTEINE DESULFURASE"/>
    <property type="match status" value="1"/>
</dbReference>
<dbReference type="PANTHER" id="PTHR43586:SF8">
    <property type="entry name" value="CYSTEINE DESULFURASE 1, CHLOROPLASTIC"/>
    <property type="match status" value="1"/>
</dbReference>
<dbReference type="Pfam" id="PF00266">
    <property type="entry name" value="Aminotran_5"/>
    <property type="match status" value="1"/>
</dbReference>
<dbReference type="SUPFAM" id="SSF53383">
    <property type="entry name" value="PLP-dependent transferases"/>
    <property type="match status" value="1"/>
</dbReference>
<name>CSD_STRCO</name>
<proteinExistence type="inferred from homology"/>
<comment type="function">
    <text evidence="1">Catalyzes the removal of elemental sulfur and selenium atoms from L-cysteine, L-cystine, L-selenocysteine, and L-selenocystine to produce L-alanine.</text>
</comment>
<comment type="catalytic activity">
    <reaction>
        <text>(sulfur carrier)-H + L-cysteine = (sulfur carrier)-SH + L-alanine</text>
        <dbReference type="Rhea" id="RHEA:43892"/>
        <dbReference type="Rhea" id="RHEA-COMP:14737"/>
        <dbReference type="Rhea" id="RHEA-COMP:14739"/>
        <dbReference type="ChEBI" id="CHEBI:29917"/>
        <dbReference type="ChEBI" id="CHEBI:35235"/>
        <dbReference type="ChEBI" id="CHEBI:57972"/>
        <dbReference type="ChEBI" id="CHEBI:64428"/>
        <dbReference type="EC" id="2.8.1.7"/>
    </reaction>
</comment>
<comment type="cofactor">
    <cofactor evidence="1">
        <name>pyridoxal 5'-phosphate</name>
        <dbReference type="ChEBI" id="CHEBI:597326"/>
    </cofactor>
</comment>
<comment type="similarity">
    <text evidence="2">Belongs to the class-V pyridoxal-phosphate-dependent aminotransferase family. Csd subfamily.</text>
</comment>
<protein>
    <recommendedName>
        <fullName>Probable cysteine desulfurase</fullName>
        <ecNumber>2.8.1.7</ecNumber>
    </recommendedName>
</protein>
<feature type="chain" id="PRO_0000150317" description="Probable cysteine desulfurase">
    <location>
        <begin position="1"/>
        <end position="418"/>
    </location>
</feature>
<feature type="active site" description="Cysteine persulfide intermediate" evidence="1">
    <location>
        <position position="376"/>
    </location>
</feature>
<feature type="modified residue" description="N6-(pyridoxal phosphate)lysine" evidence="1">
    <location>
        <position position="236"/>
    </location>
</feature>
<reference key="1">
    <citation type="journal article" date="2002" name="Nature">
        <title>Complete genome sequence of the model actinomycete Streptomyces coelicolor A3(2).</title>
        <authorList>
            <person name="Bentley S.D."/>
            <person name="Chater K.F."/>
            <person name="Cerdeno-Tarraga A.-M."/>
            <person name="Challis G.L."/>
            <person name="Thomson N.R."/>
            <person name="James K.D."/>
            <person name="Harris D.E."/>
            <person name="Quail M.A."/>
            <person name="Kieser H."/>
            <person name="Harper D."/>
            <person name="Bateman A."/>
            <person name="Brown S."/>
            <person name="Chandra G."/>
            <person name="Chen C.W."/>
            <person name="Collins M."/>
            <person name="Cronin A."/>
            <person name="Fraser A."/>
            <person name="Goble A."/>
            <person name="Hidalgo J."/>
            <person name="Hornsby T."/>
            <person name="Howarth S."/>
            <person name="Huang C.-H."/>
            <person name="Kieser T."/>
            <person name="Larke L."/>
            <person name="Murphy L.D."/>
            <person name="Oliver K."/>
            <person name="O'Neil S."/>
            <person name="Rabbinowitsch E."/>
            <person name="Rajandream M.A."/>
            <person name="Rutherford K.M."/>
            <person name="Rutter S."/>
            <person name="Seeger K."/>
            <person name="Saunders D."/>
            <person name="Sharp S."/>
            <person name="Squares R."/>
            <person name="Squares S."/>
            <person name="Taylor K."/>
            <person name="Warren T."/>
            <person name="Wietzorrek A."/>
            <person name="Woodward J.R."/>
            <person name="Barrell B.G."/>
            <person name="Parkhill J."/>
            <person name="Hopwood D.A."/>
        </authorList>
    </citation>
    <scope>NUCLEOTIDE SEQUENCE [LARGE SCALE GENOMIC DNA]</scope>
    <source>
        <strain>ATCC BAA-471 / A3(2) / M145</strain>
    </source>
</reference>
<evidence type="ECO:0000250" key="1"/>
<evidence type="ECO:0000305" key="2"/>
<gene>
    <name type="primary">csd</name>
    <name type="ordered locus">SCO1921</name>
    <name type="ORF">SCC22.03c</name>
</gene>
<sequence>MTQLPGLLDTEAIRKDFPILDRQVHDGHKLVYLDNAATSQKPRQVLDALSEYYERYNANVHRGVHVLAEEATALYEGARDKVAEFINAPSRDEVIFTKNASESLNLVANMLGWADDPYRVDHETEIVITEMEHHSNIVPWQLLAQRTGAKLRWFGLTDDGRLDLSNIDEVITEKTKVVSFVLVSNILGTQNPVEAIVRRAQEVGALVCIDASQAAPHMPLDVQALQADFVAFTGHKMCGPTGIGVLWGRQELLEDLPPFLGGGEMIETVSMHSSTYAPAPHKFEAGTPPVAQAVGLGAAIDYLNSIGMDKILAHEHALTEYAVKRLLEVPDLRIIGPTTAEERGAAISFTLGDIHPHDVGQVLDEQGIAVRVGHHCARPVCLRYGIPATTRASFYLYSTPAEIDALVDGLEHVRNFFG</sequence>
<keyword id="KW-0663">Pyridoxal phosphate</keyword>
<keyword id="KW-1185">Reference proteome</keyword>
<keyword id="KW-0808">Transferase</keyword>
<organism>
    <name type="scientific">Streptomyces coelicolor (strain ATCC BAA-471 / A3(2) / M145)</name>
    <dbReference type="NCBI Taxonomy" id="100226"/>
    <lineage>
        <taxon>Bacteria</taxon>
        <taxon>Bacillati</taxon>
        <taxon>Actinomycetota</taxon>
        <taxon>Actinomycetes</taxon>
        <taxon>Kitasatosporales</taxon>
        <taxon>Streptomycetaceae</taxon>
        <taxon>Streptomyces</taxon>
        <taxon>Streptomyces albidoflavus group</taxon>
    </lineage>
</organism>